<name>YCX2_CHLMO</name>
<accession>P09754</accession>
<dbReference type="EMBL" id="X13486">
    <property type="protein sequence ID" value="CAA31843.1"/>
    <property type="molecule type" value="Genomic_DNA"/>
</dbReference>
<dbReference type="EMBL" id="X15601">
    <property type="protein sequence ID" value="CAA33624.1"/>
    <property type="molecule type" value="Genomic_DNA"/>
</dbReference>
<dbReference type="PIR" id="S04281">
    <property type="entry name" value="S04281"/>
</dbReference>
<dbReference type="GO" id="GO:0009507">
    <property type="term" value="C:chloroplast"/>
    <property type="evidence" value="ECO:0007669"/>
    <property type="project" value="UniProtKB-SubCell"/>
</dbReference>
<dbReference type="CDD" id="cd00085">
    <property type="entry name" value="HNHc"/>
    <property type="match status" value="1"/>
</dbReference>
<dbReference type="InterPro" id="IPR003615">
    <property type="entry name" value="HNH_nuc"/>
</dbReference>
<keyword id="KW-0150">Chloroplast</keyword>
<keyword id="KW-0934">Plastid</keyword>
<organism>
    <name type="scientific">Chlamydomonas moewusii</name>
    <name type="common">Chlamydomonas eugametos</name>
    <dbReference type="NCBI Taxonomy" id="3054"/>
    <lineage>
        <taxon>Eukaryota</taxon>
        <taxon>Viridiplantae</taxon>
        <taxon>Chlorophyta</taxon>
        <taxon>core chlorophytes</taxon>
        <taxon>Chlorophyceae</taxon>
        <taxon>CS clade</taxon>
        <taxon>Chlamydomonadales</taxon>
        <taxon>Chlamydomonadaceae</taxon>
        <taxon>Chlamydomonas</taxon>
    </lineage>
</organism>
<reference key="1">
    <citation type="journal article" date="1989" name="Nucleic Acids Res.">
        <title>Two group I introns with long internal open reading frames in the chloroplast psbA gene of Chlamydomonas moewusii.</title>
        <authorList>
            <person name="Turmel M."/>
            <person name="Boulanger J."/>
            <person name="Lemieux C."/>
        </authorList>
    </citation>
    <scope>NUCLEOTIDE SEQUENCE [GENOMIC DNA]</scope>
    <source>
        <strain>UTEX 97</strain>
    </source>
</reference>
<sequence>MDFYNICCKYLKEIELTREDYSADRNSPQYNLFCSHHINPKFNKGGDEPENLVLLHYFEHAYVHLFRWLITDNPRDLGGFTSAMNAKERRELQIEKRRENPPKLTLPPLPPPAEERKKPAKTAKAIRAGKAVGSKYQLQSLKRANPFTMFMANLVLKFINNNGIEVIHKPSDNIKDVSVNSASAIGRALNNVYPTETLTNSPDGISKLLKGTNKIVQNWRIDSLFIDDFEYEITQEVLLKYQDLFETLTTYFSENQELSILELTKSMADIRNSNPKEIALIQKMFTFIKKWSFLIKSLSEGKADDEIDLPTD</sequence>
<protein>
    <recommendedName>
        <fullName>Uncharacterized 35.9 kDa protein in psbA intron 2</fullName>
    </recommendedName>
</protein>
<feature type="chain" id="PRO_0000217506" description="Uncharacterized 35.9 kDa protein in psbA intron 2">
    <location>
        <begin position="1"/>
        <end position="312"/>
    </location>
</feature>
<feature type="region of interest" description="Disordered" evidence="1">
    <location>
        <begin position="95"/>
        <end position="119"/>
    </location>
</feature>
<evidence type="ECO:0000256" key="1">
    <source>
        <dbReference type="SAM" id="MobiDB-lite"/>
    </source>
</evidence>
<geneLocation type="chloroplast"/>
<comment type="subcellular location">
    <subcellularLocation>
        <location>Plastid</location>
        <location>Chloroplast</location>
    </subcellularLocation>
</comment>
<proteinExistence type="predicted"/>